<organism>
    <name type="scientific">Homo sapiens</name>
    <name type="common">Human</name>
    <dbReference type="NCBI Taxonomy" id="9606"/>
    <lineage>
        <taxon>Eukaryota</taxon>
        <taxon>Metazoa</taxon>
        <taxon>Chordata</taxon>
        <taxon>Craniata</taxon>
        <taxon>Vertebrata</taxon>
        <taxon>Euteleostomi</taxon>
        <taxon>Mammalia</taxon>
        <taxon>Eutheria</taxon>
        <taxon>Euarchontoglires</taxon>
        <taxon>Primates</taxon>
        <taxon>Haplorrhini</taxon>
        <taxon>Catarrhini</taxon>
        <taxon>Hominidae</taxon>
        <taxon>Homo</taxon>
    </lineage>
</organism>
<protein>
    <recommendedName>
        <fullName evidence="8">Probable bifunctional dTTP/UTP pyrophosphatase/methyltransferase protein</fullName>
    </recommendedName>
    <domain>
        <recommendedName>
            <fullName evidence="8">dTTP/UTP pyrophosphatase</fullName>
            <shortName evidence="8">dTTPase/UTPase</shortName>
            <ecNumber evidence="4">3.6.1.9</ecNumber>
        </recommendedName>
        <alternativeName>
            <fullName evidence="7">Nucleoside triphosphate pyrophosphatase</fullName>
        </alternativeName>
        <alternativeName>
            <fullName evidence="7">Nucleotide pyrophosphatase</fullName>
            <shortName evidence="8">Nucleotide PPase</shortName>
        </alternativeName>
    </domain>
    <domain>
        <recommendedName>
            <fullName>N-acetylserotonin O-methyltransferase-like protein</fullName>
            <shortName>ASMTL</shortName>
            <ecNumber>2.1.1.-</ecNumber>
        </recommendedName>
    </domain>
</protein>
<comment type="function">
    <text evidence="4 8">Nucleoside triphosphate pyrophosphatase that hydrolyzes dTTP and UTP. Can also hydrolyze CTP and the modified nucleotides pseudo-UTP, 5-methyl-UTP (m(5)UTP) and 5-methyl-CTP (m(5)CTP). Has weak activity with dCTP, 8-oxo-GTP and N(4)-methyl-dCTP (PubMed:24210219). May have a dual role in cell division arrest and in preventing the incorporation of modified nucleotides into cellular nucleic acids (PubMed:24210219). In addition, the presence of the putative catalytic domain of S-adenosyl-L-methionine binding in the C-terminal region argues for a methyltransferase activity (Probable).</text>
</comment>
<comment type="catalytic activity">
    <reaction evidence="4">
        <text>dTTP + H2O = dTMP + diphosphate + H(+)</text>
        <dbReference type="Rhea" id="RHEA:28534"/>
        <dbReference type="ChEBI" id="CHEBI:15377"/>
        <dbReference type="ChEBI" id="CHEBI:15378"/>
        <dbReference type="ChEBI" id="CHEBI:33019"/>
        <dbReference type="ChEBI" id="CHEBI:37568"/>
        <dbReference type="ChEBI" id="CHEBI:63528"/>
        <dbReference type="EC" id="3.6.1.9"/>
    </reaction>
</comment>
<comment type="catalytic activity">
    <reaction evidence="4">
        <text>UTP + H2O = UMP + diphosphate + H(+)</text>
        <dbReference type="Rhea" id="RHEA:29395"/>
        <dbReference type="ChEBI" id="CHEBI:15377"/>
        <dbReference type="ChEBI" id="CHEBI:15378"/>
        <dbReference type="ChEBI" id="CHEBI:33019"/>
        <dbReference type="ChEBI" id="CHEBI:46398"/>
        <dbReference type="ChEBI" id="CHEBI:57865"/>
        <dbReference type="EC" id="3.6.1.9"/>
    </reaction>
</comment>
<comment type="catalytic activity">
    <reaction evidence="4">
        <text>CTP + H2O = CMP + diphosphate + H(+)</text>
        <dbReference type="Rhea" id="RHEA:27762"/>
        <dbReference type="ChEBI" id="CHEBI:15377"/>
        <dbReference type="ChEBI" id="CHEBI:15378"/>
        <dbReference type="ChEBI" id="CHEBI:33019"/>
        <dbReference type="ChEBI" id="CHEBI:37563"/>
        <dbReference type="ChEBI" id="CHEBI:60377"/>
        <dbReference type="EC" id="3.6.1.9"/>
    </reaction>
</comment>
<comment type="catalytic activity">
    <reaction evidence="4">
        <text>psi-UTP + H2O = psi-UMP + diphosphate + H(+)</text>
        <dbReference type="Rhea" id="RHEA:58740"/>
        <dbReference type="ChEBI" id="CHEBI:15377"/>
        <dbReference type="ChEBI" id="CHEBI:15378"/>
        <dbReference type="ChEBI" id="CHEBI:33019"/>
        <dbReference type="ChEBI" id="CHEBI:58380"/>
        <dbReference type="ChEBI" id="CHEBI:142798"/>
    </reaction>
</comment>
<comment type="catalytic activity">
    <reaction evidence="4">
        <text>5-methyl-UTP + H2O = 5-methyl-UMP + diphosphate + H(+)</text>
        <dbReference type="Rhea" id="RHEA:58736"/>
        <dbReference type="ChEBI" id="CHEBI:15377"/>
        <dbReference type="ChEBI" id="CHEBI:15378"/>
        <dbReference type="ChEBI" id="CHEBI:33019"/>
        <dbReference type="ChEBI" id="CHEBI:63527"/>
        <dbReference type="ChEBI" id="CHEBI:142797"/>
    </reaction>
</comment>
<comment type="catalytic activity">
    <reaction evidence="4">
        <text>5-methyl-CTP + H2O = 5-methyl-CMP + diphosphate + H(+)</text>
        <dbReference type="Rhea" id="RHEA:58732"/>
        <dbReference type="ChEBI" id="CHEBI:15377"/>
        <dbReference type="ChEBI" id="CHEBI:15378"/>
        <dbReference type="ChEBI" id="CHEBI:33019"/>
        <dbReference type="ChEBI" id="CHEBI:142795"/>
        <dbReference type="ChEBI" id="CHEBI:142796"/>
    </reaction>
</comment>
<comment type="cofactor">
    <cofactor evidence="4">
        <name>a divalent metal cation</name>
        <dbReference type="ChEBI" id="CHEBI:60240"/>
    </cofactor>
    <text evidence="4">Pyrophosphatase activity requires a divalent metal cation.</text>
</comment>
<comment type="biophysicochemical properties">
    <kinetics>
        <KM evidence="4">32.7 uM for dTTP</KM>
        <KM evidence="4">41.2 uM for UTP</KM>
        <KM evidence="4">17.4 uM for CTP</KM>
        <KM evidence="4">22.8 uM for dCTP</KM>
        <KM evidence="4">16.1 uM for m(5)UTP</KM>
        <KM evidence="4">39.4 uM for m(5)CTP</KM>
        <KM evidence="4">18.7 uM for pseudo-UTP</KM>
        <KM evidence="4">10.7 uM for 8-oxo-GTP</KM>
        <KM evidence="4">10.3 uM for N(4)-methyl-dCTP</KM>
        <text evidence="4">kcat is 0.7 sec(-1) with dTTP as substrate. kcat is 0.7 sec(-1) with UTP as substrate. kcat is 0.8 sec(-1) with CTP as substrate. kcat is 0.3 sec(-1) with dCTP as substrate. kcat is 1.5 sec(-1) with m(5)UTP as substrate. kcat is 3.7 sec(-1) with m(5)CTP as substrate. kcat is 2.5 sec(-1) with pseudo-UTP as substrate. kcat is 0.2 sec(-1) with 8-oxo-GTP as substrate. kcat is 0.3 sec(-1) with N(4)-methyl-dCTP as substrate.</text>
    </kinetics>
</comment>
<comment type="subunit">
    <text evidence="4">Homodimer.</text>
</comment>
<comment type="interaction">
    <interactant intactId="EBI-743231">
        <id>O95671</id>
    </interactant>
    <interactant intactId="EBI-25840379">
        <id>Q14203-5</id>
        <label>DCTN1</label>
    </interactant>
    <organismsDiffer>false</organismsDiffer>
    <experiments>3</experiments>
</comment>
<comment type="interaction">
    <interactant intactId="EBI-743231">
        <id>O95671</id>
    </interactant>
    <interactant intactId="EBI-739467">
        <id>Q9H8Y8</id>
        <label>GORASP2</label>
    </interactant>
    <organismsDiffer>false</organismsDiffer>
    <experiments>3</experiments>
</comment>
<comment type="interaction">
    <interactant intactId="EBI-743231">
        <id>O95671</id>
    </interactant>
    <interactant intactId="EBI-948001">
        <id>Q15323</id>
        <label>KRT31</label>
    </interactant>
    <organismsDiffer>false</organismsDiffer>
    <experiments>6</experiments>
</comment>
<comment type="interaction">
    <interactant intactId="EBI-743231">
        <id>O95671</id>
    </interactant>
    <interactant intactId="EBI-1047093">
        <id>O76011</id>
        <label>KRT34</label>
    </interactant>
    <organismsDiffer>false</organismsDiffer>
    <experiments>3</experiments>
</comment>
<comment type="interaction">
    <interactant intactId="EBI-743231">
        <id>O95671</id>
    </interactant>
    <interactant intactId="EBI-10171697">
        <id>Q6A162</id>
        <label>KRT40</label>
    </interactant>
    <organismsDiffer>false</organismsDiffer>
    <experiments>3</experiments>
</comment>
<comment type="interaction">
    <interactant intactId="EBI-743231">
        <id>O95671</id>
    </interactant>
    <interactant intactId="EBI-748974">
        <id>Q96CV9</id>
        <label>OPTN</label>
    </interactant>
    <organismsDiffer>false</organismsDiffer>
    <experiments>3</experiments>
</comment>
<comment type="interaction">
    <interactant intactId="EBI-743231">
        <id>O95671</id>
    </interactant>
    <interactant intactId="EBI-302345">
        <id>Q8ND90</id>
        <label>PNMA1</label>
    </interactant>
    <organismsDiffer>false</organismsDiffer>
    <experiments>3</experiments>
</comment>
<comment type="interaction">
    <interactant intactId="EBI-743231">
        <id>O95671</id>
    </interactant>
    <interactant intactId="EBI-10829018">
        <id>Q04864-2</id>
        <label>REL</label>
    </interactant>
    <organismsDiffer>false</organismsDiffer>
    <experiments>3</experiments>
</comment>
<comment type="interaction">
    <interactant intactId="EBI-743231">
        <id>O95671</id>
    </interactant>
    <interactant intactId="EBI-743494">
        <id>P48775</id>
        <label>TDO2</label>
    </interactant>
    <organismsDiffer>false</organismsDiffer>
    <experiments>12</experiments>
</comment>
<comment type="interaction">
    <interactant intactId="EBI-743231">
        <id>O95671</id>
    </interactant>
    <interactant intactId="EBI-625509">
        <id>Q8N720</id>
        <label>ZNF655</label>
    </interactant>
    <organismsDiffer>false</organismsDiffer>
    <experiments>3</experiments>
</comment>
<comment type="alternative products">
    <event type="alternative splicing"/>
    <isoform>
        <id>O95671-1</id>
        <name>1</name>
        <sequence type="displayed"/>
    </isoform>
    <isoform>
        <id>O95671-2</id>
        <name>2</name>
        <sequence type="described" ref="VSP_007213"/>
    </isoform>
    <isoform>
        <id>O95671-3</id>
        <name>3</name>
        <sequence type="described" ref="VSP_047412"/>
    </isoform>
</comment>
<comment type="tissue specificity">
    <text>Widely expressed. In adult, highly expressed in pancreas, placenta, fibroblast, thymus, prostate, testis, ovary and colon. Expressed at lower levels in spleen, small intestine and leukocytes. In fetus, expressed at high levels in the lung and kidney and at lower level in brain and liver.</text>
</comment>
<comment type="miscellaneous">
    <text>The gene coding for this protein is located in the pseudoautosomal region 1 (PAR1) of X and Y chromosomes. It represents a unique fusion product of 2 different genes of different evolutionary origin and function. The N-terminus is homologous to the bacterial maf/orfE genes and the C-terminus is homologous to ASMT. Exon duplication, exon shuffling and gene fusion seem to be common characteristics of the PAR1 region.</text>
</comment>
<comment type="similarity">
    <text evidence="9">In the N-terminal section; belongs to the Maf family. YhdE subfamily.</text>
</comment>
<comment type="similarity">
    <text evidence="8">In the C-terminal section; belongs to the class I-like SAM-binding methyltransferase superfamily. Cation-independent O-methyltransferase family.</text>
</comment>
<comment type="sequence caution" evidence="8">
    <conflict type="frameshift">
        <sequence resource="EMBL-CDS" id="CAA75675"/>
    </conflict>
</comment>
<comment type="sequence caution" evidence="8">
    <conflict type="frameshift">
        <sequence resource="EMBL-CDS" id="CAA75676"/>
    </conflict>
</comment>
<evidence type="ECO:0000250" key="1"/>
<evidence type="ECO:0000256" key="2">
    <source>
        <dbReference type="SAM" id="MobiDB-lite"/>
    </source>
</evidence>
<evidence type="ECO:0000269" key="3">
    <source>
    </source>
</evidence>
<evidence type="ECO:0000269" key="4">
    <source>
    </source>
</evidence>
<evidence type="ECO:0000269" key="5">
    <source>
    </source>
</evidence>
<evidence type="ECO:0000303" key="6">
    <source>
    </source>
</evidence>
<evidence type="ECO:0000303" key="7">
    <source>
    </source>
</evidence>
<evidence type="ECO:0000305" key="8"/>
<evidence type="ECO:0000305" key="9">
    <source>
    </source>
</evidence>
<evidence type="ECO:0007744" key="10">
    <source>
    </source>
</evidence>
<evidence type="ECO:0007744" key="11">
    <source>
    </source>
</evidence>
<evidence type="ECO:0007744" key="12">
    <source>
    </source>
</evidence>
<evidence type="ECO:0007744" key="13">
    <source>
    </source>
</evidence>
<evidence type="ECO:0007744" key="14">
    <source>
    </source>
</evidence>
<evidence type="ECO:0007744" key="15">
    <source>
    </source>
</evidence>
<evidence type="ECO:0007744" key="16">
    <source>
    </source>
</evidence>
<evidence type="ECO:0007744" key="17">
    <source>
    </source>
</evidence>
<evidence type="ECO:0007744" key="18">
    <source>
    </source>
</evidence>
<evidence type="ECO:0007829" key="19">
    <source>
        <dbReference type="PDB" id="2P5X"/>
    </source>
</evidence>
<keyword id="KW-0002">3D-structure</keyword>
<keyword id="KW-0025">Alternative splicing</keyword>
<keyword id="KW-0378">Hydrolase</keyword>
<keyword id="KW-0489">Methyltransferase</keyword>
<keyword id="KW-0546">Nucleotide metabolism</keyword>
<keyword id="KW-0597">Phosphoprotein</keyword>
<keyword id="KW-1267">Proteomics identification</keyword>
<keyword id="KW-1185">Reference proteome</keyword>
<keyword id="KW-0949">S-adenosyl-L-methionine</keyword>
<keyword id="KW-0808">Transferase</keyword>
<reference key="1">
    <citation type="journal article" date="1998" name="Hum. Mol. Genet.">
        <title>Gene duplications as a recurrent theme in the evolution of the human pseudoautosomal region 1: isolation of the gene ASMTL.</title>
        <authorList>
            <person name="Ried K."/>
            <person name="Rao E."/>
            <person name="Schiebel K."/>
            <person name="Rappold G.A."/>
        </authorList>
    </citation>
    <scope>NUCLEOTIDE SEQUENCE [GENOMIC DNA]</scope>
    <scope>VARIANT LYS-541</scope>
    <source>
        <tissue>Bone marrow</tissue>
        <tissue>Colon</tissue>
        <tissue>Fetal brain</tissue>
        <tissue>Pancreas</tissue>
        <tissue>Placenta</tissue>
    </source>
</reference>
<reference key="2">
    <citation type="journal article" date="2004" name="Nat. Genet.">
        <title>Complete sequencing and characterization of 21,243 full-length human cDNAs.</title>
        <authorList>
            <person name="Ota T."/>
            <person name="Suzuki Y."/>
            <person name="Nishikawa T."/>
            <person name="Otsuki T."/>
            <person name="Sugiyama T."/>
            <person name="Irie R."/>
            <person name="Wakamatsu A."/>
            <person name="Hayashi K."/>
            <person name="Sato H."/>
            <person name="Nagai K."/>
            <person name="Kimura K."/>
            <person name="Makita H."/>
            <person name="Sekine M."/>
            <person name="Obayashi M."/>
            <person name="Nishi T."/>
            <person name="Shibahara T."/>
            <person name="Tanaka T."/>
            <person name="Ishii S."/>
            <person name="Yamamoto J."/>
            <person name="Saito K."/>
            <person name="Kawai Y."/>
            <person name="Isono Y."/>
            <person name="Nakamura Y."/>
            <person name="Nagahari K."/>
            <person name="Murakami K."/>
            <person name="Yasuda T."/>
            <person name="Iwayanagi T."/>
            <person name="Wagatsuma M."/>
            <person name="Shiratori A."/>
            <person name="Sudo H."/>
            <person name="Hosoiri T."/>
            <person name="Kaku Y."/>
            <person name="Kodaira H."/>
            <person name="Kondo H."/>
            <person name="Sugawara M."/>
            <person name="Takahashi M."/>
            <person name="Kanda K."/>
            <person name="Yokoi T."/>
            <person name="Furuya T."/>
            <person name="Kikkawa E."/>
            <person name="Omura Y."/>
            <person name="Abe K."/>
            <person name="Kamihara K."/>
            <person name="Katsuta N."/>
            <person name="Sato K."/>
            <person name="Tanikawa M."/>
            <person name="Yamazaki M."/>
            <person name="Ninomiya K."/>
            <person name="Ishibashi T."/>
            <person name="Yamashita H."/>
            <person name="Murakawa K."/>
            <person name="Fujimori K."/>
            <person name="Tanai H."/>
            <person name="Kimata M."/>
            <person name="Watanabe M."/>
            <person name="Hiraoka S."/>
            <person name="Chiba Y."/>
            <person name="Ishida S."/>
            <person name="Ono Y."/>
            <person name="Takiguchi S."/>
            <person name="Watanabe S."/>
            <person name="Yosida M."/>
            <person name="Hotuta T."/>
            <person name="Kusano J."/>
            <person name="Kanehori K."/>
            <person name="Takahashi-Fujii A."/>
            <person name="Hara H."/>
            <person name="Tanase T.-O."/>
            <person name="Nomura Y."/>
            <person name="Togiya S."/>
            <person name="Komai F."/>
            <person name="Hara R."/>
            <person name="Takeuchi K."/>
            <person name="Arita M."/>
            <person name="Imose N."/>
            <person name="Musashino K."/>
            <person name="Yuuki H."/>
            <person name="Oshima A."/>
            <person name="Sasaki N."/>
            <person name="Aotsuka S."/>
            <person name="Yoshikawa Y."/>
            <person name="Matsunawa H."/>
            <person name="Ichihara T."/>
            <person name="Shiohata N."/>
            <person name="Sano S."/>
            <person name="Moriya S."/>
            <person name="Momiyama H."/>
            <person name="Satoh N."/>
            <person name="Takami S."/>
            <person name="Terashima Y."/>
            <person name="Suzuki O."/>
            <person name="Nakagawa S."/>
            <person name="Senoh A."/>
            <person name="Mizoguchi H."/>
            <person name="Goto Y."/>
            <person name="Shimizu F."/>
            <person name="Wakebe H."/>
            <person name="Hishigaki H."/>
            <person name="Watanabe T."/>
            <person name="Sugiyama A."/>
            <person name="Takemoto M."/>
            <person name="Kawakami B."/>
            <person name="Yamazaki M."/>
            <person name="Watanabe K."/>
            <person name="Kumagai A."/>
            <person name="Itakura S."/>
            <person name="Fukuzumi Y."/>
            <person name="Fujimori Y."/>
            <person name="Komiyama M."/>
            <person name="Tashiro H."/>
            <person name="Tanigami A."/>
            <person name="Fujiwara T."/>
            <person name="Ono T."/>
            <person name="Yamada K."/>
            <person name="Fujii Y."/>
            <person name="Ozaki K."/>
            <person name="Hirao M."/>
            <person name="Ohmori Y."/>
            <person name="Kawabata A."/>
            <person name="Hikiji T."/>
            <person name="Kobatake N."/>
            <person name="Inagaki H."/>
            <person name="Ikema Y."/>
            <person name="Okamoto S."/>
            <person name="Okitani R."/>
            <person name="Kawakami T."/>
            <person name="Noguchi S."/>
            <person name="Itoh T."/>
            <person name="Shigeta K."/>
            <person name="Senba T."/>
            <person name="Matsumura K."/>
            <person name="Nakajima Y."/>
            <person name="Mizuno T."/>
            <person name="Morinaga M."/>
            <person name="Sasaki M."/>
            <person name="Togashi T."/>
            <person name="Oyama M."/>
            <person name="Hata H."/>
            <person name="Watanabe M."/>
            <person name="Komatsu T."/>
            <person name="Mizushima-Sugano J."/>
            <person name="Satoh T."/>
            <person name="Shirai Y."/>
            <person name="Takahashi Y."/>
            <person name="Nakagawa K."/>
            <person name="Okumura K."/>
            <person name="Nagase T."/>
            <person name="Nomura N."/>
            <person name="Kikuchi H."/>
            <person name="Masuho Y."/>
            <person name="Yamashita R."/>
            <person name="Nakai K."/>
            <person name="Yada T."/>
            <person name="Nakamura Y."/>
            <person name="Ohara O."/>
            <person name="Isogai T."/>
            <person name="Sugano S."/>
        </authorList>
    </citation>
    <scope>NUCLEOTIDE SEQUENCE [LARGE SCALE MRNA] (ISOFORMS 2 AND 3)</scope>
    <source>
        <tissue>Adrenal gland</tissue>
        <tissue>Testis</tissue>
    </source>
</reference>
<reference key="3">
    <citation type="journal article" date="2005" name="Nature">
        <title>The DNA sequence of the human X chromosome.</title>
        <authorList>
            <person name="Ross M.T."/>
            <person name="Grafham D.V."/>
            <person name="Coffey A.J."/>
            <person name="Scherer S."/>
            <person name="McLay K."/>
            <person name="Muzny D."/>
            <person name="Platzer M."/>
            <person name="Howell G.R."/>
            <person name="Burrows C."/>
            <person name="Bird C.P."/>
            <person name="Frankish A."/>
            <person name="Lovell F.L."/>
            <person name="Howe K.L."/>
            <person name="Ashurst J.L."/>
            <person name="Fulton R.S."/>
            <person name="Sudbrak R."/>
            <person name="Wen G."/>
            <person name="Jones M.C."/>
            <person name="Hurles M.E."/>
            <person name="Andrews T.D."/>
            <person name="Scott C.E."/>
            <person name="Searle S."/>
            <person name="Ramser J."/>
            <person name="Whittaker A."/>
            <person name="Deadman R."/>
            <person name="Carter N.P."/>
            <person name="Hunt S.E."/>
            <person name="Chen R."/>
            <person name="Cree A."/>
            <person name="Gunaratne P."/>
            <person name="Havlak P."/>
            <person name="Hodgson A."/>
            <person name="Metzker M.L."/>
            <person name="Richards S."/>
            <person name="Scott G."/>
            <person name="Steffen D."/>
            <person name="Sodergren E."/>
            <person name="Wheeler D.A."/>
            <person name="Worley K.C."/>
            <person name="Ainscough R."/>
            <person name="Ambrose K.D."/>
            <person name="Ansari-Lari M.A."/>
            <person name="Aradhya S."/>
            <person name="Ashwell R.I."/>
            <person name="Babbage A.K."/>
            <person name="Bagguley C.L."/>
            <person name="Ballabio A."/>
            <person name="Banerjee R."/>
            <person name="Barker G.E."/>
            <person name="Barlow K.F."/>
            <person name="Barrett I.P."/>
            <person name="Bates K.N."/>
            <person name="Beare D.M."/>
            <person name="Beasley H."/>
            <person name="Beasley O."/>
            <person name="Beck A."/>
            <person name="Bethel G."/>
            <person name="Blechschmidt K."/>
            <person name="Brady N."/>
            <person name="Bray-Allen S."/>
            <person name="Bridgeman A.M."/>
            <person name="Brown A.J."/>
            <person name="Brown M.J."/>
            <person name="Bonnin D."/>
            <person name="Bruford E.A."/>
            <person name="Buhay C."/>
            <person name="Burch P."/>
            <person name="Burford D."/>
            <person name="Burgess J."/>
            <person name="Burrill W."/>
            <person name="Burton J."/>
            <person name="Bye J.M."/>
            <person name="Carder C."/>
            <person name="Carrel L."/>
            <person name="Chako J."/>
            <person name="Chapman J.C."/>
            <person name="Chavez D."/>
            <person name="Chen E."/>
            <person name="Chen G."/>
            <person name="Chen Y."/>
            <person name="Chen Z."/>
            <person name="Chinault C."/>
            <person name="Ciccodicola A."/>
            <person name="Clark S.Y."/>
            <person name="Clarke G."/>
            <person name="Clee C.M."/>
            <person name="Clegg S."/>
            <person name="Clerc-Blankenburg K."/>
            <person name="Clifford K."/>
            <person name="Cobley V."/>
            <person name="Cole C.G."/>
            <person name="Conquer J.S."/>
            <person name="Corby N."/>
            <person name="Connor R.E."/>
            <person name="David R."/>
            <person name="Davies J."/>
            <person name="Davis C."/>
            <person name="Davis J."/>
            <person name="Delgado O."/>
            <person name="Deshazo D."/>
            <person name="Dhami P."/>
            <person name="Ding Y."/>
            <person name="Dinh H."/>
            <person name="Dodsworth S."/>
            <person name="Draper H."/>
            <person name="Dugan-Rocha S."/>
            <person name="Dunham A."/>
            <person name="Dunn M."/>
            <person name="Durbin K.J."/>
            <person name="Dutta I."/>
            <person name="Eades T."/>
            <person name="Ellwood M."/>
            <person name="Emery-Cohen A."/>
            <person name="Errington H."/>
            <person name="Evans K.L."/>
            <person name="Faulkner L."/>
            <person name="Francis F."/>
            <person name="Frankland J."/>
            <person name="Fraser A.E."/>
            <person name="Galgoczy P."/>
            <person name="Gilbert J."/>
            <person name="Gill R."/>
            <person name="Gloeckner G."/>
            <person name="Gregory S.G."/>
            <person name="Gribble S."/>
            <person name="Griffiths C."/>
            <person name="Grocock R."/>
            <person name="Gu Y."/>
            <person name="Gwilliam R."/>
            <person name="Hamilton C."/>
            <person name="Hart E.A."/>
            <person name="Hawes A."/>
            <person name="Heath P.D."/>
            <person name="Heitmann K."/>
            <person name="Hennig S."/>
            <person name="Hernandez J."/>
            <person name="Hinzmann B."/>
            <person name="Ho S."/>
            <person name="Hoffs M."/>
            <person name="Howden P.J."/>
            <person name="Huckle E.J."/>
            <person name="Hume J."/>
            <person name="Hunt P.J."/>
            <person name="Hunt A.R."/>
            <person name="Isherwood J."/>
            <person name="Jacob L."/>
            <person name="Johnson D."/>
            <person name="Jones S."/>
            <person name="de Jong P.J."/>
            <person name="Joseph S.S."/>
            <person name="Keenan S."/>
            <person name="Kelly S."/>
            <person name="Kershaw J.K."/>
            <person name="Khan Z."/>
            <person name="Kioschis P."/>
            <person name="Klages S."/>
            <person name="Knights A.J."/>
            <person name="Kosiura A."/>
            <person name="Kovar-Smith C."/>
            <person name="Laird G.K."/>
            <person name="Langford C."/>
            <person name="Lawlor S."/>
            <person name="Leversha M."/>
            <person name="Lewis L."/>
            <person name="Liu W."/>
            <person name="Lloyd C."/>
            <person name="Lloyd D.M."/>
            <person name="Loulseged H."/>
            <person name="Loveland J.E."/>
            <person name="Lovell J.D."/>
            <person name="Lozado R."/>
            <person name="Lu J."/>
            <person name="Lyne R."/>
            <person name="Ma J."/>
            <person name="Maheshwari M."/>
            <person name="Matthews L.H."/>
            <person name="McDowall J."/>
            <person name="McLaren S."/>
            <person name="McMurray A."/>
            <person name="Meidl P."/>
            <person name="Meitinger T."/>
            <person name="Milne S."/>
            <person name="Miner G."/>
            <person name="Mistry S.L."/>
            <person name="Morgan M."/>
            <person name="Morris S."/>
            <person name="Mueller I."/>
            <person name="Mullikin J.C."/>
            <person name="Nguyen N."/>
            <person name="Nordsiek G."/>
            <person name="Nyakatura G."/>
            <person name="O'dell C.N."/>
            <person name="Okwuonu G."/>
            <person name="Palmer S."/>
            <person name="Pandian R."/>
            <person name="Parker D."/>
            <person name="Parrish J."/>
            <person name="Pasternak S."/>
            <person name="Patel D."/>
            <person name="Pearce A.V."/>
            <person name="Pearson D.M."/>
            <person name="Pelan S.E."/>
            <person name="Perez L."/>
            <person name="Porter K.M."/>
            <person name="Ramsey Y."/>
            <person name="Reichwald K."/>
            <person name="Rhodes S."/>
            <person name="Ridler K.A."/>
            <person name="Schlessinger D."/>
            <person name="Schueler M.G."/>
            <person name="Sehra H.K."/>
            <person name="Shaw-Smith C."/>
            <person name="Shen H."/>
            <person name="Sheridan E.M."/>
            <person name="Shownkeen R."/>
            <person name="Skuce C.D."/>
            <person name="Smith M.L."/>
            <person name="Sotheran E.C."/>
            <person name="Steingruber H.E."/>
            <person name="Steward C.A."/>
            <person name="Storey R."/>
            <person name="Swann R.M."/>
            <person name="Swarbreck D."/>
            <person name="Tabor P.E."/>
            <person name="Taudien S."/>
            <person name="Taylor T."/>
            <person name="Teague B."/>
            <person name="Thomas K."/>
            <person name="Thorpe A."/>
            <person name="Timms K."/>
            <person name="Tracey A."/>
            <person name="Trevanion S."/>
            <person name="Tromans A.C."/>
            <person name="d'Urso M."/>
            <person name="Verduzco D."/>
            <person name="Villasana D."/>
            <person name="Waldron L."/>
            <person name="Wall M."/>
            <person name="Wang Q."/>
            <person name="Warren J."/>
            <person name="Warry G.L."/>
            <person name="Wei X."/>
            <person name="West A."/>
            <person name="Whitehead S.L."/>
            <person name="Whiteley M.N."/>
            <person name="Wilkinson J.E."/>
            <person name="Willey D.L."/>
            <person name="Williams G."/>
            <person name="Williams L."/>
            <person name="Williamson A."/>
            <person name="Williamson H."/>
            <person name="Wilming L."/>
            <person name="Woodmansey R.L."/>
            <person name="Wray P.W."/>
            <person name="Yen J."/>
            <person name="Zhang J."/>
            <person name="Zhou J."/>
            <person name="Zoghbi H."/>
            <person name="Zorilla S."/>
            <person name="Buck D."/>
            <person name="Reinhardt R."/>
            <person name="Poustka A."/>
            <person name="Rosenthal A."/>
            <person name="Lehrach H."/>
            <person name="Meindl A."/>
            <person name="Minx P.J."/>
            <person name="Hillier L.W."/>
            <person name="Willard H.F."/>
            <person name="Wilson R.K."/>
            <person name="Waterston R.H."/>
            <person name="Rice C.M."/>
            <person name="Vaudin M."/>
            <person name="Coulson A."/>
            <person name="Nelson D.L."/>
            <person name="Weinstock G."/>
            <person name="Sulston J.E."/>
            <person name="Durbin R.M."/>
            <person name="Hubbard T."/>
            <person name="Gibbs R.A."/>
            <person name="Beck S."/>
            <person name="Rogers J."/>
            <person name="Bentley D.R."/>
        </authorList>
    </citation>
    <scope>NUCLEOTIDE SEQUENCE [LARGE SCALE GENOMIC DNA]</scope>
</reference>
<reference key="4">
    <citation type="journal article" date="2004" name="Genome Res.">
        <title>The status, quality, and expansion of the NIH full-length cDNA project: the Mammalian Gene Collection (MGC).</title>
        <authorList>
            <consortium name="The MGC Project Team"/>
        </authorList>
    </citation>
    <scope>NUCLEOTIDE SEQUENCE [LARGE SCALE MRNA] (ISOFORM 1)</scope>
    <scope>VARIANTS MET-458 AND LYS-541</scope>
    <source>
        <tissue>Colon adenocarcinoma</tissue>
    </source>
</reference>
<reference key="5">
    <citation type="journal article" date="2006" name="Cell">
        <title>Global, in vivo, and site-specific phosphorylation dynamics in signaling networks.</title>
        <authorList>
            <person name="Olsen J.V."/>
            <person name="Blagoev B."/>
            <person name="Gnad F."/>
            <person name="Macek B."/>
            <person name="Kumar C."/>
            <person name="Mortensen P."/>
            <person name="Mann M."/>
        </authorList>
    </citation>
    <scope>PHOSPHORYLATION [LARGE SCALE ANALYSIS] AT SER-239</scope>
    <scope>IDENTIFICATION BY MASS SPECTROMETRY [LARGE SCALE ANALYSIS]</scope>
    <source>
        <tissue>Cervix carcinoma</tissue>
    </source>
</reference>
<reference key="6">
    <citation type="journal article" date="2008" name="Mol. Cell">
        <title>Kinase-selective enrichment enables quantitative phosphoproteomics of the kinome across the cell cycle.</title>
        <authorList>
            <person name="Daub H."/>
            <person name="Olsen J.V."/>
            <person name="Bairlein M."/>
            <person name="Gnad F."/>
            <person name="Oppermann F.S."/>
            <person name="Korner R."/>
            <person name="Greff Z."/>
            <person name="Keri G."/>
            <person name="Stemmann O."/>
            <person name="Mann M."/>
        </authorList>
    </citation>
    <scope>PHOSPHORYLATION [LARGE SCALE ANALYSIS] AT SER-239</scope>
    <scope>IDENTIFICATION BY MASS SPECTROMETRY [LARGE SCALE ANALYSIS]</scope>
    <source>
        <tissue>Cervix carcinoma</tissue>
    </source>
</reference>
<reference key="7">
    <citation type="journal article" date="2008" name="Proc. Natl. Acad. Sci. U.S.A.">
        <title>A quantitative atlas of mitotic phosphorylation.</title>
        <authorList>
            <person name="Dephoure N."/>
            <person name="Zhou C."/>
            <person name="Villen J."/>
            <person name="Beausoleil S.A."/>
            <person name="Bakalarski C.E."/>
            <person name="Elledge S.J."/>
            <person name="Gygi S.P."/>
        </authorList>
    </citation>
    <scope>PHOSPHORYLATION [LARGE SCALE ANALYSIS] AT SER-239</scope>
    <scope>IDENTIFICATION BY MASS SPECTROMETRY [LARGE SCALE ANALYSIS]</scope>
    <source>
        <tissue>Cervix carcinoma</tissue>
    </source>
</reference>
<reference key="8">
    <citation type="journal article" date="2008" name="Proteomics">
        <title>Large-scale phosphoproteome analysis of human liver tissue by enrichment and fractionation of phosphopeptides with strong anion exchange chromatography.</title>
        <authorList>
            <person name="Han G."/>
            <person name="Ye M."/>
            <person name="Zhou H."/>
            <person name="Jiang X."/>
            <person name="Feng S."/>
            <person name="Jiang X."/>
            <person name="Tian R."/>
            <person name="Wan D."/>
            <person name="Zou H."/>
            <person name="Gu J."/>
        </authorList>
    </citation>
    <scope>PHOSPHORYLATION [LARGE SCALE ANALYSIS] AT SER-239</scope>
    <scope>IDENTIFICATION BY MASS SPECTROMETRY [LARGE SCALE ANALYSIS]</scope>
    <source>
        <tissue>Liver</tissue>
    </source>
</reference>
<reference key="9">
    <citation type="journal article" date="2009" name="Anal. Chem.">
        <title>Lys-N and trypsin cover complementary parts of the phosphoproteome in a refined SCX-based approach.</title>
        <authorList>
            <person name="Gauci S."/>
            <person name="Helbig A.O."/>
            <person name="Slijper M."/>
            <person name="Krijgsveld J."/>
            <person name="Heck A.J."/>
            <person name="Mohammed S."/>
        </authorList>
    </citation>
    <scope>IDENTIFICATION BY MASS SPECTROMETRY [LARGE SCALE ANALYSIS]</scope>
</reference>
<reference key="10">
    <citation type="journal article" date="2009" name="Sci. Signal.">
        <title>Quantitative phosphoproteomic analysis of T cell receptor signaling reveals system-wide modulation of protein-protein interactions.</title>
        <authorList>
            <person name="Mayya V."/>
            <person name="Lundgren D.H."/>
            <person name="Hwang S.-I."/>
            <person name="Rezaul K."/>
            <person name="Wu L."/>
            <person name="Eng J.K."/>
            <person name="Rodionov V."/>
            <person name="Han D.K."/>
        </authorList>
    </citation>
    <scope>PHOSPHORYLATION [LARGE SCALE ANALYSIS] AT SER-239</scope>
    <scope>IDENTIFICATION BY MASS SPECTROMETRY [LARGE SCALE ANALYSIS]</scope>
    <source>
        <tissue>Leukemic T-cell</tissue>
    </source>
</reference>
<reference key="11">
    <citation type="journal article" date="2010" name="Sci. Signal.">
        <title>Quantitative phosphoproteomics reveals widespread full phosphorylation site occupancy during mitosis.</title>
        <authorList>
            <person name="Olsen J.V."/>
            <person name="Vermeulen M."/>
            <person name="Santamaria A."/>
            <person name="Kumar C."/>
            <person name="Miller M.L."/>
            <person name="Jensen L.J."/>
            <person name="Gnad F."/>
            <person name="Cox J."/>
            <person name="Jensen T.S."/>
            <person name="Nigg E.A."/>
            <person name="Brunak S."/>
            <person name="Mann M."/>
        </authorList>
    </citation>
    <scope>PHOSPHORYLATION [LARGE SCALE ANALYSIS] AT SER-239</scope>
    <scope>IDENTIFICATION BY MASS SPECTROMETRY [LARGE SCALE ANALYSIS]</scope>
    <source>
        <tissue>Cervix carcinoma</tissue>
    </source>
</reference>
<reference key="12">
    <citation type="journal article" date="2011" name="BMC Syst. Biol.">
        <title>Initial characterization of the human central proteome.</title>
        <authorList>
            <person name="Burkard T.R."/>
            <person name="Planyavsky M."/>
            <person name="Kaupe I."/>
            <person name="Breitwieser F.P."/>
            <person name="Buerckstuemmer T."/>
            <person name="Bennett K.L."/>
            <person name="Superti-Furga G."/>
            <person name="Colinge J."/>
        </authorList>
    </citation>
    <scope>IDENTIFICATION BY MASS SPECTROMETRY [LARGE SCALE ANALYSIS]</scope>
</reference>
<reference key="13">
    <citation type="journal article" date="2011" name="Sci. Signal.">
        <title>System-wide temporal characterization of the proteome and phosphoproteome of human embryonic stem cell differentiation.</title>
        <authorList>
            <person name="Rigbolt K.T."/>
            <person name="Prokhorova T.A."/>
            <person name="Akimov V."/>
            <person name="Henningsen J."/>
            <person name="Johansen P.T."/>
            <person name="Kratchmarova I."/>
            <person name="Kassem M."/>
            <person name="Mann M."/>
            <person name="Olsen J.V."/>
            <person name="Blagoev B."/>
        </authorList>
    </citation>
    <scope>PHOSPHORYLATION [LARGE SCALE ANALYSIS] AT SER-239</scope>
    <scope>IDENTIFICATION BY MASS SPECTROMETRY [LARGE SCALE ANALYSIS]</scope>
</reference>
<reference key="14">
    <citation type="journal article" date="2013" name="Chem. Biol.">
        <title>Biochemical and structural studies of conserved Maf proteins revealed nucleotide pyrophosphatases with a preference for modified nucleotides.</title>
        <authorList>
            <person name="Tchigvintsev A."/>
            <person name="Tchigvintsev D."/>
            <person name="Flick R."/>
            <person name="Popovic A."/>
            <person name="Dong A."/>
            <person name="Xu X."/>
            <person name="Brown G."/>
            <person name="Lu W."/>
            <person name="Wu H."/>
            <person name="Cui H."/>
            <person name="Dombrowski L."/>
            <person name="Joo J.C."/>
            <person name="Beloglazova N."/>
            <person name="Min J."/>
            <person name="Savchenko A."/>
            <person name="Caudy A.A."/>
            <person name="Rabinowitz J.D."/>
            <person name="Murzin A.G."/>
            <person name="Yakunin A.F."/>
        </authorList>
    </citation>
    <scope>FUNCTION AS A PYROPHOSPHATASE</scope>
    <scope>CATALYTIC ACTIVITY</scope>
    <scope>COFACTOR</scope>
    <scope>BIOPHYSICOCHEMICAL PROPERTIES</scope>
    <scope>SUBUNIT</scope>
    <scope>ACTIVE SITE</scope>
    <scope>MUTAGENESIS OF SER-19; SER-21; ARG-23; ARG-24; GLU-44; TYR-57; LYS-65; ASP-88; GLU-99 AND GLN-179</scope>
</reference>
<reference key="15">
    <citation type="journal article" date="2013" name="J. Proteome Res.">
        <title>Toward a comprehensive characterization of a human cancer cell phosphoproteome.</title>
        <authorList>
            <person name="Zhou H."/>
            <person name="Di Palma S."/>
            <person name="Preisinger C."/>
            <person name="Peng M."/>
            <person name="Polat A.N."/>
            <person name="Heck A.J."/>
            <person name="Mohammed S."/>
        </authorList>
    </citation>
    <scope>PHOSPHORYLATION [LARGE SCALE ANALYSIS] AT SER-21; SER-239 AND SER-421</scope>
    <scope>IDENTIFICATION BY MASS SPECTROMETRY [LARGE SCALE ANALYSIS]</scope>
    <source>
        <tissue>Cervix carcinoma</tissue>
        <tissue>Erythroleukemia</tissue>
    </source>
</reference>
<reference key="16">
    <citation type="journal article" date="2014" name="J. Proteomics">
        <title>An enzyme assisted RP-RPLC approach for in-depth analysis of human liver phosphoproteome.</title>
        <authorList>
            <person name="Bian Y."/>
            <person name="Song C."/>
            <person name="Cheng K."/>
            <person name="Dong M."/>
            <person name="Wang F."/>
            <person name="Huang J."/>
            <person name="Sun D."/>
            <person name="Wang L."/>
            <person name="Ye M."/>
            <person name="Zou H."/>
        </authorList>
    </citation>
    <scope>PHOSPHORYLATION [LARGE SCALE ANALYSIS] AT SER-21; SER-228; THR-234 AND SER-239</scope>
    <scope>IDENTIFICATION BY MASS SPECTROMETRY [LARGE SCALE ANALYSIS]</scope>
    <source>
        <tissue>Liver</tissue>
    </source>
</reference>
<reference key="17">
    <citation type="submission" date="2007-03" db="PDB data bank">
        <title>Crystal structure of maf domain of human N-acetylserotonin O-methyltransferase-like protein.</title>
        <authorList>
            <consortium name="Structural genomics consortium (SGC)"/>
        </authorList>
    </citation>
    <scope>X-RAY CRYSTALLOGRAPHY (2.0 ANGSTROMS) OF 10-239</scope>
</reference>
<proteinExistence type="evidence at protein level"/>
<accession>O95671</accession>
<accession>B4DX75</accession>
<accession>F5GXH4</accession>
<accession>J3JS33</accession>
<accession>Q5JQ53</accession>
<accession>Q8NBH5</accession>
<accession>Q96G02</accession>
<accession>Q9BUL6</accession>
<sequence>MVLCPVIGKLLHKRVVLASASPRRQEILSNAGLRFEVVPSKFKEKLDKASFATPYGYAMETAKQKALEVANRLYQKDLRAPDVVIGADTIVTVGGLILEKPVDKQDAYRMLSRLSGREHSVFTGVAIVHCSSKDHQLDTRVSEFYEETKVKFSELSEELLWEYVHSGEPMDKAGGYGIQALGGMLVESVHGDFLNVVGFPLNHFCKQLVKLYYPPRPEDLRRSVKHDSIPAADTFEDLSDVEGGGSEPTQRDAGSRDEKAEAGEAGQATAEAECHRTRETLPPFPTRLLELIEGFMLSKGLLTACKLKVFDLLKDEAPQKAADIASKVDASACGMERLLDICAAMGLLEKTEQGYSNTETANVYLASDGEYSLHGFIMHNNDLTWNLFTYLEFAIREGTNQHHRALGKKAEDLFQDAYYQSPETRLRFMRAMHGMTKLTACQVATAFNLSRFSSACDVGGCTGALARELAREYPRMQVTVFDLPDIIELAAHFQPPGPQAVQIHFAAGDFFRDPLPSAELYVLCRILHDWPDDKVHKLLSRVAESCKPGAGLLLVETLLDEEKRVAQRALMQSLNMLVQTEGKERSLGEYQCLLELHGFHQVQVVHLGGVLDAILATKVAP</sequence>
<feature type="chain" id="PRO_0000064702" description="Probable bifunctional dTTP/UTP pyrophosphatase/methyltransferase protein">
    <location>
        <begin position="1"/>
        <end position="621"/>
    </location>
</feature>
<feature type="region of interest" description="MAF-like">
    <location>
        <begin position="11"/>
        <end position="223"/>
    </location>
</feature>
<feature type="region of interest" description="Disordered" evidence="2">
    <location>
        <begin position="235"/>
        <end position="279"/>
    </location>
</feature>
<feature type="region of interest" description="ASMT-like">
    <location>
        <begin position="277"/>
        <end position="621"/>
    </location>
</feature>
<feature type="compositionally biased region" description="Basic and acidic residues" evidence="2">
    <location>
        <begin position="249"/>
        <end position="262"/>
    </location>
</feature>
<feature type="active site" description="Proton acceptor; for pyrophosphatase activity" evidence="9">
    <location>
        <position position="88"/>
    </location>
</feature>
<feature type="binding site" evidence="1">
    <location>
        <position position="482"/>
    </location>
    <ligand>
        <name>S-adenosyl-L-methionine</name>
        <dbReference type="ChEBI" id="CHEBI:59789"/>
    </ligand>
</feature>
<feature type="binding site" evidence="1">
    <location>
        <begin position="508"/>
        <end position="510"/>
    </location>
    <ligand>
        <name>S-adenosyl-L-methionine</name>
        <dbReference type="ChEBI" id="CHEBI:59789"/>
    </ligand>
</feature>
<feature type="binding site" evidence="1">
    <location>
        <position position="525"/>
    </location>
    <ligand>
        <name>S-adenosyl-L-methionine</name>
        <dbReference type="ChEBI" id="CHEBI:59789"/>
    </ligand>
</feature>
<feature type="site" description="Important for substrate specificity; for pyrophosphatase activity" evidence="9">
    <location>
        <position position="23"/>
    </location>
</feature>
<feature type="site" description="Important for substrate specificity; for pyrophosphatase activity" evidence="9">
    <location>
        <position position="89"/>
    </location>
</feature>
<feature type="site" description="Important for substrate specificity; for pyrophosphatase activity" evidence="9">
    <location>
        <position position="179"/>
    </location>
</feature>
<feature type="modified residue" description="Phosphoserine" evidence="17 18">
    <location>
        <position position="21"/>
    </location>
</feature>
<feature type="modified residue" description="Phosphoserine" evidence="18">
    <location>
        <position position="228"/>
    </location>
</feature>
<feature type="modified residue" description="Phosphothreonine" evidence="18">
    <location>
        <position position="234"/>
    </location>
</feature>
<feature type="modified residue" description="Phosphoserine" evidence="10 11 12 13 14 15 16 17 18">
    <location>
        <position position="239"/>
    </location>
</feature>
<feature type="modified residue" description="Phosphoserine" evidence="17">
    <location>
        <position position="421"/>
    </location>
</feature>
<feature type="splice variant" id="VSP_047412" description="In isoform 3." evidence="6">
    <location>
        <begin position="1"/>
        <end position="58"/>
    </location>
</feature>
<feature type="splice variant" id="VSP_007213" description="In isoform 2." evidence="6">
    <location>
        <begin position="76"/>
        <end position="91"/>
    </location>
</feature>
<feature type="sequence variant" id="VAR_054802" description="In dbSNP:rs4503285." evidence="3">
    <original>V</original>
    <variation>M</variation>
    <location>
        <position position="458"/>
    </location>
</feature>
<feature type="sequence variant" id="VAR_054803" description="In dbSNP:rs1127297." evidence="3 5">
    <original>R</original>
    <variation>K</variation>
    <location>
        <position position="541"/>
    </location>
</feature>
<feature type="mutagenesis site" description="Loss of pyrophosphatase activity." evidence="4">
    <original>S</original>
    <variation>A</variation>
    <location>
        <position position="19"/>
    </location>
</feature>
<feature type="mutagenesis site" description="Loss of pyrophosphatase activity." evidence="4">
    <original>S</original>
    <variation>A</variation>
    <location>
        <position position="21"/>
    </location>
</feature>
<feature type="mutagenesis site" description="Decrease in pyrophosphatase activity." evidence="4">
    <original>R</original>
    <variation>A</variation>
    <location>
        <position position="23"/>
    </location>
</feature>
<feature type="mutagenesis site" description="Loss of pyrophosphatase activity." evidence="4">
    <original>R</original>
    <variation>A</variation>
    <location>
        <position position="24"/>
    </location>
</feature>
<feature type="mutagenesis site" description="Loss of pyrophosphatase activity." evidence="4">
    <original>E</original>
    <variation>A</variation>
    <location>
        <position position="44"/>
    </location>
</feature>
<feature type="mutagenesis site" description="Loss of pyrophosphatase activity." evidence="4">
    <original>Y</original>
    <variation>A</variation>
    <location>
        <position position="57"/>
    </location>
</feature>
<feature type="mutagenesis site" description="Loss of pyrophosphatase activity." evidence="4">
    <original>K</original>
    <variation>A</variation>
    <location>
        <position position="65"/>
    </location>
</feature>
<feature type="mutagenesis site" description="Loss of pyrophosphatase activity." evidence="4">
    <original>D</original>
    <variation>A</variation>
    <variation>N</variation>
    <location>
        <position position="88"/>
    </location>
</feature>
<feature type="mutagenesis site" description="Loss of pyrophosphatase activity." evidence="4">
    <original>E</original>
    <variation>A</variation>
    <location>
        <position position="99"/>
    </location>
</feature>
<feature type="mutagenesis site" description="Loss of pyrophosphatase activity." evidence="4">
    <original>Q</original>
    <variation>A</variation>
    <location>
        <position position="179"/>
    </location>
</feature>
<feature type="mutagenesis site" description="Strong decrease in pyrophosphatase activity." evidence="4">
    <original>Q</original>
    <variation>E</variation>
    <location>
        <position position="179"/>
    </location>
</feature>
<feature type="sequence conflict" description="In Ref. 2; BAG63287." evidence="8" ref="2">
    <original>S</original>
    <variation>P</variation>
    <location>
        <position position="228"/>
    </location>
</feature>
<feature type="sequence conflict" description="In Ref. 2; BAG63287." evidence="8" ref="2">
    <original>Y</original>
    <variation>H</variation>
    <location>
        <position position="364"/>
    </location>
</feature>
<feature type="sequence conflict" description="In Ref. 2; BAG63287." evidence="8" ref="2">
    <original>G</original>
    <variation>S</variation>
    <location>
        <position position="434"/>
    </location>
</feature>
<feature type="strand" evidence="19">
    <location>
        <begin position="15"/>
        <end position="17"/>
    </location>
</feature>
<feature type="helix" evidence="19">
    <location>
        <begin position="22"/>
        <end position="30"/>
    </location>
</feature>
<feature type="helix" evidence="19">
    <location>
        <begin position="48"/>
        <end position="50"/>
    </location>
</feature>
<feature type="strand" evidence="19">
    <location>
        <begin position="51"/>
        <end position="53"/>
    </location>
</feature>
<feature type="helix" evidence="19">
    <location>
        <begin position="54"/>
        <end position="77"/>
    </location>
</feature>
<feature type="strand" evidence="19">
    <location>
        <begin position="82"/>
        <end position="93"/>
    </location>
</feature>
<feature type="strand" evidence="19">
    <location>
        <begin position="96"/>
        <end position="98"/>
    </location>
</feature>
<feature type="helix" evidence="19">
    <location>
        <begin position="104"/>
        <end position="114"/>
    </location>
</feature>
<feature type="strand" evidence="19">
    <location>
        <begin position="117"/>
        <end position="133"/>
    </location>
</feature>
<feature type="strand" evidence="19">
    <location>
        <begin position="136"/>
        <end position="152"/>
    </location>
</feature>
<feature type="helix" evidence="19">
    <location>
        <begin position="157"/>
        <end position="166"/>
    </location>
</feature>
<feature type="helix" evidence="19">
    <location>
        <begin position="168"/>
        <end position="171"/>
    </location>
</feature>
<feature type="helix" evidence="19">
    <location>
        <begin position="173"/>
        <end position="175"/>
    </location>
</feature>
<feature type="strand" evidence="19">
    <location>
        <begin position="178"/>
        <end position="180"/>
    </location>
</feature>
<feature type="helix" evidence="19">
    <location>
        <begin position="181"/>
        <end position="184"/>
    </location>
</feature>
<feature type="strand" evidence="19">
    <location>
        <begin position="186"/>
        <end position="191"/>
    </location>
</feature>
<feature type="helix" evidence="19">
    <location>
        <begin position="193"/>
        <end position="197"/>
    </location>
</feature>
<feature type="helix" evidence="19">
    <location>
        <begin position="201"/>
        <end position="212"/>
    </location>
</feature>
<gene>
    <name type="primary">ASMTL</name>
</gene>
<name>ASML_HUMAN</name>
<dbReference type="EC" id="3.6.1.9" evidence="4"/>
<dbReference type="EC" id="2.1.1.-"/>
<dbReference type="EMBL" id="Y15521">
    <property type="protein sequence ID" value="CAA75675.1"/>
    <property type="status" value="ALT_FRAME"/>
    <property type="molecule type" value="Genomic_DNA"/>
</dbReference>
<dbReference type="EMBL" id="Y15521">
    <property type="protein sequence ID" value="CAA75676.1"/>
    <property type="status" value="ALT_FRAME"/>
    <property type="molecule type" value="Genomic_DNA"/>
</dbReference>
<dbReference type="EMBL" id="AK090498">
    <property type="protein sequence ID" value="BAC03468.1"/>
    <property type="molecule type" value="mRNA"/>
</dbReference>
<dbReference type="EMBL" id="AK301844">
    <property type="protein sequence ID" value="BAG63287.1"/>
    <property type="molecule type" value="mRNA"/>
</dbReference>
<dbReference type="EMBL" id="AL683870">
    <property type="status" value="NOT_ANNOTATED_CDS"/>
    <property type="molecule type" value="Genomic_DNA"/>
</dbReference>
<dbReference type="EMBL" id="BC002508">
    <property type="protein sequence ID" value="AAH02508.1"/>
    <property type="molecule type" value="mRNA"/>
</dbReference>
<dbReference type="EMBL" id="BC010089">
    <property type="protein sequence ID" value="AAH10089.1"/>
    <property type="molecule type" value="mRNA"/>
</dbReference>
<dbReference type="CCDS" id="CCDS43917.1">
    <molecule id="O95671-1"/>
</dbReference>
<dbReference type="CCDS" id="CCDS55362.1">
    <molecule id="O95671-3"/>
</dbReference>
<dbReference type="CCDS" id="CCDS55363.1">
    <molecule id="O95671-2"/>
</dbReference>
<dbReference type="RefSeq" id="NP_001166944.1">
    <molecule id="O95671-3"/>
    <property type="nucleotide sequence ID" value="NM_001173473.2"/>
</dbReference>
<dbReference type="RefSeq" id="NP_001166945.1">
    <molecule id="O95671-2"/>
    <property type="nucleotide sequence ID" value="NM_001173474.2"/>
</dbReference>
<dbReference type="RefSeq" id="NP_001411122.1">
    <molecule id="O95671-1"/>
    <property type="nucleotide sequence ID" value="NM_001424193.1"/>
</dbReference>
<dbReference type="RefSeq" id="NP_001411123.1">
    <molecule id="O95671-3"/>
    <property type="nucleotide sequence ID" value="NM_001424194.1"/>
</dbReference>
<dbReference type="RefSeq" id="NP_004183.2">
    <molecule id="O95671-1"/>
    <property type="nucleotide sequence ID" value="NM_004192.4"/>
</dbReference>
<dbReference type="RefSeq" id="XP_005274491.1">
    <property type="nucleotide sequence ID" value="XM_005274434.3"/>
</dbReference>
<dbReference type="RefSeq" id="XP_005274840.1">
    <property type="nucleotide sequence ID" value="XM_005274783.3"/>
</dbReference>
<dbReference type="PDB" id="2P5X">
    <property type="method" value="X-ray"/>
    <property type="resolution" value="2.00 A"/>
    <property type="chains" value="A/B=10-239"/>
</dbReference>
<dbReference type="PDB" id="6XI4">
    <property type="method" value="X-ray"/>
    <property type="resolution" value="2.22 A"/>
    <property type="chains" value="A/B=10-239"/>
</dbReference>
<dbReference type="PDB" id="6XI5">
    <property type="method" value="X-ray"/>
    <property type="resolution" value="2.61 A"/>
    <property type="chains" value="A/B=10-239"/>
</dbReference>
<dbReference type="PDBsum" id="2P5X"/>
<dbReference type="PDBsum" id="6XI4"/>
<dbReference type="PDBsum" id="6XI5"/>
<dbReference type="SMR" id="O95671"/>
<dbReference type="BioGRID" id="114178">
    <property type="interactions" value="45"/>
</dbReference>
<dbReference type="FunCoup" id="O95671">
    <property type="interactions" value="635"/>
</dbReference>
<dbReference type="IntAct" id="O95671">
    <property type="interactions" value="28"/>
</dbReference>
<dbReference type="MINT" id="O95671"/>
<dbReference type="STRING" id="9606.ENSP00000370718"/>
<dbReference type="GlyGen" id="O95671">
    <property type="glycosylation" value="1 site, 1 O-linked glycan (1 site)"/>
</dbReference>
<dbReference type="iPTMnet" id="O95671"/>
<dbReference type="MetOSite" id="O95671"/>
<dbReference type="PhosphoSitePlus" id="O95671"/>
<dbReference type="BioMuta" id="ASMTL"/>
<dbReference type="jPOST" id="O95671"/>
<dbReference type="MassIVE" id="O95671"/>
<dbReference type="PaxDb" id="9606-ENSP00000370718"/>
<dbReference type="PeptideAtlas" id="O95671"/>
<dbReference type="ProteomicsDB" id="24424"/>
<dbReference type="ProteomicsDB" id="50984">
    <molecule id="O95671-1"/>
</dbReference>
<dbReference type="ProteomicsDB" id="50985">
    <molecule id="O95671-2"/>
</dbReference>
<dbReference type="Pumba" id="O95671"/>
<dbReference type="Antibodypedia" id="587">
    <property type="antibodies" value="198 antibodies from 26 providers"/>
</dbReference>
<dbReference type="DNASU" id="8623"/>
<dbReference type="Ensembl" id="ENST00000381317.9">
    <molecule id="O95671-1"/>
    <property type="protein sequence ID" value="ENSP00000370718.3"/>
    <property type="gene ID" value="ENSG00000169093.16"/>
</dbReference>
<dbReference type="Ensembl" id="ENST00000381333.9">
    <molecule id="O95671-2"/>
    <property type="protein sequence ID" value="ENSP00000370734.4"/>
    <property type="gene ID" value="ENSG00000169093.16"/>
</dbReference>
<dbReference type="Ensembl" id="ENST00000534940.6">
    <molecule id="O95671-3"/>
    <property type="protein sequence ID" value="ENSP00000446410.1"/>
    <property type="gene ID" value="ENSG00000169093.16"/>
</dbReference>
<dbReference type="Ensembl" id="ENST00000711192.1">
    <molecule id="O95671-3"/>
    <property type="protein sequence ID" value="ENSP00000518598.1"/>
    <property type="gene ID" value="ENSG00000292339.1"/>
</dbReference>
<dbReference type="Ensembl" id="ENST00000711196.1">
    <molecule id="O95671-2"/>
    <property type="protein sequence ID" value="ENSP00000518599.1"/>
    <property type="gene ID" value="ENSG00000292339.1"/>
</dbReference>
<dbReference type="Ensembl" id="ENST00000711197.1">
    <molecule id="O95671-1"/>
    <property type="protein sequence ID" value="ENSP00000518600.1"/>
    <property type="gene ID" value="ENSG00000292339.1"/>
</dbReference>
<dbReference type="GeneID" id="8623"/>
<dbReference type="KEGG" id="hsa:8623"/>
<dbReference type="MANE-Select" id="ENST00000381317.9">
    <property type="protein sequence ID" value="ENSP00000370718.3"/>
    <property type="RefSeq nucleotide sequence ID" value="NM_004192.4"/>
    <property type="RefSeq protein sequence ID" value="NP_004183.2"/>
</dbReference>
<dbReference type="UCSC" id="uc004cpx.3">
    <molecule id="O95671-1"/>
    <property type="organism name" value="human"/>
</dbReference>
<dbReference type="AGR" id="HGNC:751"/>
<dbReference type="CTD" id="8623"/>
<dbReference type="DisGeNET" id="8623"/>
<dbReference type="GeneCards" id="ASMTL"/>
<dbReference type="HGNC" id="HGNC:751">
    <property type="gene designation" value="ASMTL"/>
</dbReference>
<dbReference type="HPA" id="ENSG00000169093">
    <property type="expression patterns" value="Low tissue specificity"/>
</dbReference>
<dbReference type="MalaCards" id="ASMTL"/>
<dbReference type="MIM" id="300162">
    <property type="type" value="gene"/>
</dbReference>
<dbReference type="MIM" id="400011">
    <property type="type" value="gene"/>
</dbReference>
<dbReference type="neXtProt" id="NX_O95671"/>
<dbReference type="OpenTargets" id="ENSG00000169093"/>
<dbReference type="PharmGKB" id="PA25050"/>
<dbReference type="VEuPathDB" id="HostDB:ENSG00000169093"/>
<dbReference type="eggNOG" id="KOG1509">
    <property type="taxonomic scope" value="Eukaryota"/>
</dbReference>
<dbReference type="eggNOG" id="KOG3178">
    <property type="taxonomic scope" value="Eukaryota"/>
</dbReference>
<dbReference type="GeneTree" id="ENSGT00940000162413"/>
<dbReference type="HOGENOM" id="CLU_032774_0_0_1"/>
<dbReference type="InParanoid" id="O95671"/>
<dbReference type="OMA" id="VLCHEKD"/>
<dbReference type="OrthoDB" id="10267058at2759"/>
<dbReference type="PAN-GO" id="O95671">
    <property type="GO annotations" value="1 GO annotation based on evolutionary models"/>
</dbReference>
<dbReference type="PhylomeDB" id="O95671"/>
<dbReference type="TreeFam" id="TF314574"/>
<dbReference type="PathwayCommons" id="O95671"/>
<dbReference type="SignaLink" id="O95671"/>
<dbReference type="BioGRID-ORCS" id="8623">
    <property type="hits" value="7 hits in 620 CRISPR screens"/>
</dbReference>
<dbReference type="ChiTaRS" id="ASMTL">
    <property type="organism name" value="human"/>
</dbReference>
<dbReference type="EvolutionaryTrace" id="O95671"/>
<dbReference type="GeneWiki" id="ASMTL"/>
<dbReference type="GenomeRNAi" id="8623"/>
<dbReference type="Pharos" id="O95671">
    <property type="development level" value="Tbio"/>
</dbReference>
<dbReference type="PRO" id="PR:O95671"/>
<dbReference type="Proteomes" id="UP000005640">
    <property type="component" value="Chromosome X"/>
</dbReference>
<dbReference type="Proteomes" id="UP000005640">
    <property type="component" value="Chromosome Y"/>
</dbReference>
<dbReference type="RNAct" id="O95671">
    <property type="molecule type" value="protein"/>
</dbReference>
<dbReference type="Bgee" id="ENSG00000169093">
    <property type="expression patterns" value="Expressed in palpebral conjunctiva and 209 other cell types or tissues"/>
</dbReference>
<dbReference type="GO" id="GO:0005829">
    <property type="term" value="C:cytosol"/>
    <property type="evidence" value="ECO:0000314"/>
    <property type="project" value="HPA"/>
</dbReference>
<dbReference type="GO" id="GO:0036218">
    <property type="term" value="F:dTTP diphosphatase activity"/>
    <property type="evidence" value="ECO:0007669"/>
    <property type="project" value="RHEA"/>
</dbReference>
<dbReference type="GO" id="GO:0047429">
    <property type="term" value="F:nucleoside triphosphate diphosphatase activity"/>
    <property type="evidence" value="ECO:0000318"/>
    <property type="project" value="GO_Central"/>
</dbReference>
<dbReference type="GO" id="GO:0008171">
    <property type="term" value="F:O-methyltransferase activity"/>
    <property type="evidence" value="ECO:0007669"/>
    <property type="project" value="InterPro"/>
</dbReference>
<dbReference type="GO" id="GO:0046983">
    <property type="term" value="F:protein dimerization activity"/>
    <property type="evidence" value="ECO:0007669"/>
    <property type="project" value="InterPro"/>
</dbReference>
<dbReference type="GO" id="GO:0036221">
    <property type="term" value="F:UTP diphosphatase activity"/>
    <property type="evidence" value="ECO:0007669"/>
    <property type="project" value="RHEA"/>
</dbReference>
<dbReference type="GO" id="GO:0032259">
    <property type="term" value="P:methylation"/>
    <property type="evidence" value="ECO:0007669"/>
    <property type="project" value="UniProtKB-KW"/>
</dbReference>
<dbReference type="GO" id="GO:0009117">
    <property type="term" value="P:nucleotide metabolic process"/>
    <property type="evidence" value="ECO:0007669"/>
    <property type="project" value="UniProtKB-KW"/>
</dbReference>
<dbReference type="CDD" id="cd02440">
    <property type="entry name" value="AdoMet_MTases"/>
    <property type="match status" value="1"/>
</dbReference>
<dbReference type="CDD" id="cd00555">
    <property type="entry name" value="Maf"/>
    <property type="match status" value="1"/>
</dbReference>
<dbReference type="FunFam" id="1.10.10.10:FF:000358">
    <property type="entry name" value="Acetylserotonin O-methyltransferase"/>
    <property type="match status" value="1"/>
</dbReference>
<dbReference type="FunFam" id="3.40.50.150:FF:000146">
    <property type="entry name" value="Acetylserotonin O-methyltransferase"/>
    <property type="match status" value="1"/>
</dbReference>
<dbReference type="FunFam" id="3.90.950.10:FF:000020">
    <property type="entry name" value="Probable bifunctional dTTP/UTP pyrophosphatase/methyltransferase protein"/>
    <property type="match status" value="1"/>
</dbReference>
<dbReference type="Gene3D" id="3.90.950.10">
    <property type="match status" value="1"/>
</dbReference>
<dbReference type="Gene3D" id="3.40.50.150">
    <property type="entry name" value="Vaccinia Virus protein VP39"/>
    <property type="match status" value="1"/>
</dbReference>
<dbReference type="Gene3D" id="1.10.10.10">
    <property type="entry name" value="Winged helix-like DNA-binding domain superfamily/Winged helix DNA-binding domain"/>
    <property type="match status" value="1"/>
</dbReference>
<dbReference type="HAMAP" id="MF_00528">
    <property type="entry name" value="Maf"/>
    <property type="match status" value="1"/>
</dbReference>
<dbReference type="InterPro" id="IPR016461">
    <property type="entry name" value="COMT-like"/>
</dbReference>
<dbReference type="InterPro" id="IPR029001">
    <property type="entry name" value="ITPase-like_fam"/>
</dbReference>
<dbReference type="InterPro" id="IPR003697">
    <property type="entry name" value="Maf-like"/>
</dbReference>
<dbReference type="InterPro" id="IPR001077">
    <property type="entry name" value="O_MeTrfase_dom"/>
</dbReference>
<dbReference type="InterPro" id="IPR012967">
    <property type="entry name" value="Plant_O-MeTrfase_dimerisation"/>
</dbReference>
<dbReference type="InterPro" id="IPR029063">
    <property type="entry name" value="SAM-dependent_MTases_sf"/>
</dbReference>
<dbReference type="InterPro" id="IPR036388">
    <property type="entry name" value="WH-like_DNA-bd_sf"/>
</dbReference>
<dbReference type="InterPro" id="IPR036390">
    <property type="entry name" value="WH_DNA-bd_sf"/>
</dbReference>
<dbReference type="NCBIfam" id="TIGR00172">
    <property type="entry name" value="maf"/>
    <property type="match status" value="1"/>
</dbReference>
<dbReference type="PANTHER" id="PTHR43213">
    <property type="entry name" value="BIFUNCTIONAL DTTP/UTP PYROPHOSPHATASE/METHYLTRANSFERASE PROTEIN-RELATED"/>
    <property type="match status" value="1"/>
</dbReference>
<dbReference type="PANTHER" id="PTHR43213:SF5">
    <property type="entry name" value="BIFUNCTIONAL DTTP_UTP PYROPHOSPHATASE_METHYLTRANSFERASE PROTEIN-RELATED"/>
    <property type="match status" value="1"/>
</dbReference>
<dbReference type="Pfam" id="PF08100">
    <property type="entry name" value="Dimerisation"/>
    <property type="match status" value="1"/>
</dbReference>
<dbReference type="Pfam" id="PF02545">
    <property type="entry name" value="Maf"/>
    <property type="match status" value="1"/>
</dbReference>
<dbReference type="Pfam" id="PF00891">
    <property type="entry name" value="Methyltransf_2"/>
    <property type="match status" value="1"/>
</dbReference>
<dbReference type="SUPFAM" id="SSF52972">
    <property type="entry name" value="ITPase-like"/>
    <property type="match status" value="1"/>
</dbReference>
<dbReference type="SUPFAM" id="SSF53335">
    <property type="entry name" value="S-adenosyl-L-methionine-dependent methyltransferases"/>
    <property type="match status" value="1"/>
</dbReference>
<dbReference type="SUPFAM" id="SSF46785">
    <property type="entry name" value="Winged helix' DNA-binding domain"/>
    <property type="match status" value="1"/>
</dbReference>
<dbReference type="PROSITE" id="PS51683">
    <property type="entry name" value="SAM_OMT_II"/>
    <property type="match status" value="1"/>
</dbReference>